<feature type="chain" id="PRO_0000254094" description="RIB43A-like with coiled-coils protein 1">
    <location>
        <begin position="1"/>
        <end position="379"/>
    </location>
</feature>
<feature type="region of interest" description="Disordered" evidence="3">
    <location>
        <begin position="1"/>
        <end position="21"/>
    </location>
</feature>
<feature type="coiled-coil region" evidence="2">
    <location>
        <begin position="85"/>
        <end position="111"/>
    </location>
</feature>
<feature type="coiled-coil region" evidence="2">
    <location>
        <begin position="161"/>
        <end position="241"/>
    </location>
</feature>
<feature type="coiled-coil region" evidence="2">
    <location>
        <begin position="280"/>
        <end position="304"/>
    </location>
</feature>
<feature type="compositionally biased region" description="Basic and acidic residues" evidence="3">
    <location>
        <begin position="9"/>
        <end position="21"/>
    </location>
</feature>
<reference key="1">
    <citation type="submission" date="2005-06" db="EMBL/GenBank/DDBJ databases">
        <title>DNA sequences of macaque genes expressed in brain or testis and its evolutionary implications.</title>
        <authorList>
            <consortium name="International consortium for macaque cDNA sequencing and analysis"/>
        </authorList>
    </citation>
    <scope>NUCLEOTIDE SEQUENCE [LARGE SCALE MRNA]</scope>
    <source>
        <tissue>Testis</tissue>
    </source>
</reference>
<gene>
    <name type="primary">RIBC1</name>
    <name type="ORF">QtsA-18671</name>
</gene>
<accession>Q4R698</accession>
<protein>
    <recommendedName>
        <fullName>RIB43A-like with coiled-coils protein 1</fullName>
    </recommendedName>
</protein>
<name>RIBC1_MACFA</name>
<proteinExistence type="evidence at transcript level"/>
<sequence length="379" mass="44012">MYNINQSTDTKEAAAIEARRNREKERQNRFFNVRNRVMGVDVQALNNQVGDRKLREAAERSKEAAYGTSQVQYDVVVQMLEKEEADRTRRLAKKVQEFREQKQQLKNGREFSLWDPDQVWKGLPTYLSYSNTYPGPASLQYFSGEDLDRATRLRMQQGQFRYNLERQQQEQQQAKVDENCADALSNQLRLAMDAQATHLARLEESCRAAMMCAMANANKAQAAVQAGRQRCERQREQKANLAEIRHQSTSDLLTENPQVAQHRTAPHRVLPYCWKGMTPEQRAAIRKEQEVQRSKKEAHRQAEKTLDTEWKSQTMSSAQALLELEEQERELCAVFQRGLGSFNQQLANEQKAQQDYLNSVIYTNQPTAQYHRQFNTSSR</sequence>
<keyword id="KW-0966">Cell projection</keyword>
<keyword id="KW-0969">Cilium</keyword>
<keyword id="KW-0175">Coiled coil</keyword>
<keyword id="KW-0963">Cytoplasm</keyword>
<keyword id="KW-0206">Cytoskeleton</keyword>
<keyword id="KW-0282">Flagellum</keyword>
<keyword id="KW-1185">Reference proteome</keyword>
<evidence type="ECO:0000250" key="1">
    <source>
        <dbReference type="UniProtKB" id="Q9D0B8"/>
    </source>
</evidence>
<evidence type="ECO:0000255" key="2"/>
<evidence type="ECO:0000256" key="3">
    <source>
        <dbReference type="SAM" id="MobiDB-lite"/>
    </source>
</evidence>
<evidence type="ECO:0000305" key="4"/>
<organism>
    <name type="scientific">Macaca fascicularis</name>
    <name type="common">Crab-eating macaque</name>
    <name type="synonym">Cynomolgus monkey</name>
    <dbReference type="NCBI Taxonomy" id="9541"/>
    <lineage>
        <taxon>Eukaryota</taxon>
        <taxon>Metazoa</taxon>
        <taxon>Chordata</taxon>
        <taxon>Craniata</taxon>
        <taxon>Vertebrata</taxon>
        <taxon>Euteleostomi</taxon>
        <taxon>Mammalia</taxon>
        <taxon>Eutheria</taxon>
        <taxon>Euarchontoglires</taxon>
        <taxon>Primates</taxon>
        <taxon>Haplorrhini</taxon>
        <taxon>Catarrhini</taxon>
        <taxon>Cercopithecidae</taxon>
        <taxon>Cercopithecinae</taxon>
        <taxon>Macaca</taxon>
    </lineage>
</organism>
<dbReference type="EMBL" id="AB169289">
    <property type="protein sequence ID" value="BAE01377.1"/>
    <property type="molecule type" value="mRNA"/>
</dbReference>
<dbReference type="RefSeq" id="NP_001306500.1">
    <property type="nucleotide sequence ID" value="NM_001319571.1"/>
</dbReference>
<dbReference type="SMR" id="Q4R698"/>
<dbReference type="STRING" id="9541.ENSMFAP00000006051"/>
<dbReference type="eggNOG" id="ENOG502QWST">
    <property type="taxonomic scope" value="Eukaryota"/>
</dbReference>
<dbReference type="Proteomes" id="UP000233100">
    <property type="component" value="Unplaced"/>
</dbReference>
<dbReference type="GO" id="GO:0160111">
    <property type="term" value="C:axonemal A tubule inner sheath"/>
    <property type="evidence" value="ECO:0000250"/>
    <property type="project" value="UniProtKB"/>
</dbReference>
<dbReference type="GO" id="GO:0036126">
    <property type="term" value="C:sperm flagellum"/>
    <property type="evidence" value="ECO:0000250"/>
    <property type="project" value="UniProtKB"/>
</dbReference>
<dbReference type="GO" id="GO:0030317">
    <property type="term" value="P:flagellated sperm motility"/>
    <property type="evidence" value="ECO:0000250"/>
    <property type="project" value="UniProtKB"/>
</dbReference>
<dbReference type="InterPro" id="IPR008805">
    <property type="entry name" value="RIB43A"/>
</dbReference>
<dbReference type="PANTHER" id="PTHR14517:SF11">
    <property type="entry name" value="RIB43A-LIKE WITH COILED-COILS PROTEIN 1"/>
    <property type="match status" value="1"/>
</dbReference>
<dbReference type="PANTHER" id="PTHR14517">
    <property type="entry name" value="RIB43A-RELATED"/>
    <property type="match status" value="1"/>
</dbReference>
<dbReference type="Pfam" id="PF05914">
    <property type="entry name" value="RIB43A"/>
    <property type="match status" value="1"/>
</dbReference>
<comment type="subunit">
    <text evidence="1">Microtubule inner protein component of sperm flagellar doublet microtubules.</text>
</comment>
<comment type="subcellular location">
    <subcellularLocation>
        <location evidence="1">Cytoplasm</location>
        <location evidence="1">Cytoskeleton</location>
        <location evidence="1">Flagellum axoneme</location>
    </subcellularLocation>
</comment>
<comment type="similarity">
    <text evidence="4">Belongs to the RIB43A family.</text>
</comment>